<keyword id="KW-0238">DNA-binding</keyword>
<keyword id="KW-0539">Nucleus</keyword>
<keyword id="KW-1185">Reference proteome</keyword>
<keyword id="KW-0804">Transcription</keyword>
<keyword id="KW-0805">Transcription regulation</keyword>
<protein>
    <recommendedName>
        <fullName>Putative T-box protein 11</fullName>
    </recommendedName>
</protein>
<proteinExistence type="inferred from homology"/>
<comment type="subcellular location">
    <subcellularLocation>
        <location evidence="1">Nucleus</location>
    </subcellularLocation>
</comment>
<name>TBX11_CAEEL</name>
<feature type="chain" id="PRO_0000184473" description="Putative T-box protein 11">
    <location>
        <begin position="1"/>
        <end position="322"/>
    </location>
</feature>
<feature type="DNA-binding region" description="T-box" evidence="1">
    <location>
        <begin position="16"/>
        <end position="185"/>
    </location>
</feature>
<feature type="region of interest" description="Disordered" evidence="2">
    <location>
        <begin position="171"/>
        <end position="214"/>
    </location>
</feature>
<feature type="compositionally biased region" description="Polar residues" evidence="2">
    <location>
        <begin position="171"/>
        <end position="182"/>
    </location>
</feature>
<dbReference type="EMBL" id="FO080364">
    <property type="protein sequence ID" value="CCD63187.1"/>
    <property type="molecule type" value="Genomic_DNA"/>
</dbReference>
<dbReference type="PIR" id="E88473">
    <property type="entry name" value="E88473"/>
</dbReference>
<dbReference type="RefSeq" id="NP_498317.1">
    <property type="nucleotide sequence ID" value="NM_065916.4"/>
</dbReference>
<dbReference type="SMR" id="Q20257"/>
<dbReference type="BioGRID" id="50343">
    <property type="interactions" value="1"/>
</dbReference>
<dbReference type="FunCoup" id="Q20257">
    <property type="interactions" value="3"/>
</dbReference>
<dbReference type="IntAct" id="Q20257">
    <property type="interactions" value="1"/>
</dbReference>
<dbReference type="STRING" id="6239.F40H6.4.1"/>
<dbReference type="PaxDb" id="6239-F40H6.4"/>
<dbReference type="EnsemblMetazoa" id="F40H6.4.1">
    <property type="protein sequence ID" value="F40H6.4.1"/>
    <property type="gene ID" value="WBGene00006547"/>
</dbReference>
<dbReference type="GeneID" id="185575"/>
<dbReference type="KEGG" id="cel:CELE_F40H6.4"/>
<dbReference type="UCSC" id="F40H6.4">
    <property type="organism name" value="c. elegans"/>
</dbReference>
<dbReference type="AGR" id="WB:WBGene00006547"/>
<dbReference type="CTD" id="185575"/>
<dbReference type="WormBase" id="F40H6.4">
    <property type="protein sequence ID" value="CE01281"/>
    <property type="gene ID" value="WBGene00006547"/>
    <property type="gene designation" value="tbx-11"/>
</dbReference>
<dbReference type="eggNOG" id="KOG3585">
    <property type="taxonomic scope" value="Eukaryota"/>
</dbReference>
<dbReference type="HOGENOM" id="CLU_032588_1_0_1"/>
<dbReference type="InParanoid" id="Q20257"/>
<dbReference type="OMA" id="LTQHRYI"/>
<dbReference type="OrthoDB" id="5869419at2759"/>
<dbReference type="PhylomeDB" id="Q20257"/>
<dbReference type="SignaLink" id="Q20257"/>
<dbReference type="PRO" id="PR:Q20257"/>
<dbReference type="Proteomes" id="UP000001940">
    <property type="component" value="Chromosome III"/>
</dbReference>
<dbReference type="Bgee" id="WBGene00006547">
    <property type="expression patterns" value="Expressed in embryo and 4 other cell types or tissues"/>
</dbReference>
<dbReference type="GO" id="GO:0000785">
    <property type="term" value="C:chromatin"/>
    <property type="evidence" value="ECO:0000318"/>
    <property type="project" value="GO_Central"/>
</dbReference>
<dbReference type="GO" id="GO:0005634">
    <property type="term" value="C:nucleus"/>
    <property type="evidence" value="ECO:0000318"/>
    <property type="project" value="GO_Central"/>
</dbReference>
<dbReference type="GO" id="GO:0000981">
    <property type="term" value="F:DNA-binding transcription factor activity, RNA polymerase II-specific"/>
    <property type="evidence" value="ECO:0000318"/>
    <property type="project" value="GO_Central"/>
</dbReference>
<dbReference type="GO" id="GO:0000978">
    <property type="term" value="F:RNA polymerase II cis-regulatory region sequence-specific DNA binding"/>
    <property type="evidence" value="ECO:0000318"/>
    <property type="project" value="GO_Central"/>
</dbReference>
<dbReference type="GO" id="GO:0001708">
    <property type="term" value="P:cell fate specification"/>
    <property type="evidence" value="ECO:0000318"/>
    <property type="project" value="GO_Central"/>
</dbReference>
<dbReference type="GO" id="GO:0045893">
    <property type="term" value="P:positive regulation of DNA-templated transcription"/>
    <property type="evidence" value="ECO:0007669"/>
    <property type="project" value="InterPro"/>
</dbReference>
<dbReference type="GO" id="GO:0006357">
    <property type="term" value="P:regulation of transcription by RNA polymerase II"/>
    <property type="evidence" value="ECO:0000318"/>
    <property type="project" value="GO_Central"/>
</dbReference>
<dbReference type="CDD" id="cd00182">
    <property type="entry name" value="T-box"/>
    <property type="match status" value="1"/>
</dbReference>
<dbReference type="FunFam" id="2.60.40.820:FF:000013">
    <property type="entry name" value="T-box transcription factor tbx-9"/>
    <property type="match status" value="1"/>
</dbReference>
<dbReference type="Gene3D" id="2.60.40.820">
    <property type="entry name" value="Transcription factor, T-box"/>
    <property type="match status" value="1"/>
</dbReference>
<dbReference type="InterPro" id="IPR008967">
    <property type="entry name" value="p53-like_TF_DNA-bd_sf"/>
</dbReference>
<dbReference type="InterPro" id="IPR046360">
    <property type="entry name" value="T-box_DNA-bd"/>
</dbReference>
<dbReference type="InterPro" id="IPR036960">
    <property type="entry name" value="T-box_sf"/>
</dbReference>
<dbReference type="InterPro" id="IPR001699">
    <property type="entry name" value="TF_T-box"/>
</dbReference>
<dbReference type="InterPro" id="IPR018186">
    <property type="entry name" value="TF_T-box_CS"/>
</dbReference>
<dbReference type="PANTHER" id="PTHR11267:SF59">
    <property type="entry name" value="T-BOX PROTEIN 11-RELATED"/>
    <property type="match status" value="1"/>
</dbReference>
<dbReference type="PANTHER" id="PTHR11267">
    <property type="entry name" value="T-BOX PROTEIN-RELATED"/>
    <property type="match status" value="1"/>
</dbReference>
<dbReference type="Pfam" id="PF00907">
    <property type="entry name" value="T-box"/>
    <property type="match status" value="1"/>
</dbReference>
<dbReference type="PRINTS" id="PR00937">
    <property type="entry name" value="TBOX"/>
</dbReference>
<dbReference type="SMART" id="SM00425">
    <property type="entry name" value="TBOX"/>
    <property type="match status" value="1"/>
</dbReference>
<dbReference type="SUPFAM" id="SSF49417">
    <property type="entry name" value="p53-like transcription factors"/>
    <property type="match status" value="1"/>
</dbReference>
<dbReference type="PROSITE" id="PS01283">
    <property type="entry name" value="TBOX_1"/>
    <property type="match status" value="1"/>
</dbReference>
<dbReference type="PROSITE" id="PS01264">
    <property type="entry name" value="TBOX_2"/>
    <property type="match status" value="1"/>
</dbReference>
<dbReference type="PROSITE" id="PS50252">
    <property type="entry name" value="TBOX_3"/>
    <property type="match status" value="1"/>
</dbReference>
<evidence type="ECO:0000255" key="1">
    <source>
        <dbReference type="PROSITE-ProRule" id="PRU00201"/>
    </source>
</evidence>
<evidence type="ECO:0000256" key="2">
    <source>
        <dbReference type="SAM" id="MobiDB-lite"/>
    </source>
</evidence>
<accession>Q20257</accession>
<sequence>MDQPISVTLSSTTDPLWRSCHEYDNEMVITVNGRRIFPTLEYTVTGLDTFKLYSMCMHLDLVDDKKLRFTGGQWAESVSTEKKDPPRKVWHHNGSQTGKDWMLRNVSFDQIRITNRKSKEDGNASYVHLLTQHRYIPVLTIYEGDQLVHTARIPHSQFISVTAYHKGELNTLKTNNNPYSTGSRKDRRRERQSPVYSEGTSSEKSISPPPAKKIKDMAPALPDYSVISKPNLLQSLIFPMIAEQPSTSQSPPAPPVFPFNPDLQMQMLQPFMLPQFGFPCGFPSINPFMNPFLTPFTSMFPTPTVSPDGEGVKLEPEAFVEV</sequence>
<reference key="1">
    <citation type="journal article" date="1998" name="Science">
        <title>Genome sequence of the nematode C. elegans: a platform for investigating biology.</title>
        <authorList>
            <consortium name="The C. elegans sequencing consortium"/>
        </authorList>
    </citation>
    <scope>NUCLEOTIDE SEQUENCE [LARGE SCALE GENOMIC DNA]</scope>
    <source>
        <strain>Bristol N2</strain>
    </source>
</reference>
<organism>
    <name type="scientific">Caenorhabditis elegans</name>
    <dbReference type="NCBI Taxonomy" id="6239"/>
    <lineage>
        <taxon>Eukaryota</taxon>
        <taxon>Metazoa</taxon>
        <taxon>Ecdysozoa</taxon>
        <taxon>Nematoda</taxon>
        <taxon>Chromadorea</taxon>
        <taxon>Rhabditida</taxon>
        <taxon>Rhabditina</taxon>
        <taxon>Rhabditomorpha</taxon>
        <taxon>Rhabditoidea</taxon>
        <taxon>Rhabditidae</taxon>
        <taxon>Peloderinae</taxon>
        <taxon>Caenorhabditis</taxon>
    </lineage>
</organism>
<gene>
    <name type="primary">tbx-11</name>
    <name type="ORF">F40H6.4</name>
</gene>